<keyword id="KW-1185">Reference proteome</keyword>
<keyword id="KW-0687">Ribonucleoprotein</keyword>
<keyword id="KW-0689">Ribosomal protein</keyword>
<sequence length="98" mass="10643">MSRRCEITGVGPMVGHNVSHSNIKTKRRFMPNLTKVTVLSDALGQNVTLRVTNAALRTVDAKGGLDAVLLKARDEVLSPRALKIKRQIKAKLAEQPAA</sequence>
<dbReference type="EMBL" id="CP000747">
    <property type="protein sequence ID" value="ACG77136.1"/>
    <property type="molecule type" value="Genomic_DNA"/>
</dbReference>
<dbReference type="RefSeq" id="WP_012521284.1">
    <property type="nucleotide sequence ID" value="NC_011144.1"/>
</dbReference>
<dbReference type="SMR" id="B4RFQ5"/>
<dbReference type="STRING" id="450851.PHZ_c0722"/>
<dbReference type="KEGG" id="pzu:PHZ_c0722"/>
<dbReference type="eggNOG" id="COG0227">
    <property type="taxonomic scope" value="Bacteria"/>
</dbReference>
<dbReference type="HOGENOM" id="CLU_064548_4_2_5"/>
<dbReference type="OrthoDB" id="9805609at2"/>
<dbReference type="Proteomes" id="UP000001868">
    <property type="component" value="Chromosome"/>
</dbReference>
<dbReference type="GO" id="GO:0022625">
    <property type="term" value="C:cytosolic large ribosomal subunit"/>
    <property type="evidence" value="ECO:0007669"/>
    <property type="project" value="TreeGrafter"/>
</dbReference>
<dbReference type="GO" id="GO:0003735">
    <property type="term" value="F:structural constituent of ribosome"/>
    <property type="evidence" value="ECO:0007669"/>
    <property type="project" value="InterPro"/>
</dbReference>
<dbReference type="GO" id="GO:0006412">
    <property type="term" value="P:translation"/>
    <property type="evidence" value="ECO:0007669"/>
    <property type="project" value="UniProtKB-UniRule"/>
</dbReference>
<dbReference type="Gene3D" id="2.30.170.40">
    <property type="entry name" value="Ribosomal protein L28/L24"/>
    <property type="match status" value="1"/>
</dbReference>
<dbReference type="HAMAP" id="MF_00373">
    <property type="entry name" value="Ribosomal_bL28"/>
    <property type="match status" value="1"/>
</dbReference>
<dbReference type="InterPro" id="IPR026569">
    <property type="entry name" value="Ribosomal_bL28"/>
</dbReference>
<dbReference type="InterPro" id="IPR034704">
    <property type="entry name" value="Ribosomal_bL28/bL31-like_sf"/>
</dbReference>
<dbReference type="InterPro" id="IPR001383">
    <property type="entry name" value="Ribosomal_bL28_bact-type"/>
</dbReference>
<dbReference type="InterPro" id="IPR037147">
    <property type="entry name" value="Ribosomal_bL28_sf"/>
</dbReference>
<dbReference type="NCBIfam" id="TIGR00009">
    <property type="entry name" value="L28"/>
    <property type="match status" value="1"/>
</dbReference>
<dbReference type="PANTHER" id="PTHR13528">
    <property type="entry name" value="39S RIBOSOMAL PROTEIN L28, MITOCHONDRIAL"/>
    <property type="match status" value="1"/>
</dbReference>
<dbReference type="PANTHER" id="PTHR13528:SF2">
    <property type="entry name" value="LARGE RIBOSOMAL SUBUNIT PROTEIN BL28M"/>
    <property type="match status" value="1"/>
</dbReference>
<dbReference type="Pfam" id="PF00830">
    <property type="entry name" value="Ribosomal_L28"/>
    <property type="match status" value="1"/>
</dbReference>
<dbReference type="SUPFAM" id="SSF143800">
    <property type="entry name" value="L28p-like"/>
    <property type="match status" value="1"/>
</dbReference>
<feature type="chain" id="PRO_1000121667" description="Large ribosomal subunit protein bL28">
    <location>
        <begin position="1"/>
        <end position="98"/>
    </location>
</feature>
<reference key="1">
    <citation type="journal article" date="2008" name="BMC Genomics">
        <title>Complete genome of Phenylobacterium zucineum - a novel facultative intracellular bacterium isolated from human erythroleukemia cell line K562.</title>
        <authorList>
            <person name="Luo Y."/>
            <person name="Xu X."/>
            <person name="Ding Z."/>
            <person name="Liu Z."/>
            <person name="Zhang B."/>
            <person name="Yan Z."/>
            <person name="Sun J."/>
            <person name="Hu S."/>
            <person name="Hu X."/>
        </authorList>
    </citation>
    <scope>NUCLEOTIDE SEQUENCE [LARGE SCALE GENOMIC DNA]</scope>
    <source>
        <strain>HLK1</strain>
    </source>
</reference>
<evidence type="ECO:0000255" key="1">
    <source>
        <dbReference type="HAMAP-Rule" id="MF_00373"/>
    </source>
</evidence>
<evidence type="ECO:0000305" key="2"/>
<accession>B4RFQ5</accession>
<proteinExistence type="inferred from homology"/>
<comment type="similarity">
    <text evidence="1">Belongs to the bacterial ribosomal protein bL28 family.</text>
</comment>
<organism>
    <name type="scientific">Phenylobacterium zucineum (strain HLK1)</name>
    <dbReference type="NCBI Taxonomy" id="450851"/>
    <lineage>
        <taxon>Bacteria</taxon>
        <taxon>Pseudomonadati</taxon>
        <taxon>Pseudomonadota</taxon>
        <taxon>Alphaproteobacteria</taxon>
        <taxon>Caulobacterales</taxon>
        <taxon>Caulobacteraceae</taxon>
        <taxon>Phenylobacterium</taxon>
    </lineage>
</organism>
<gene>
    <name evidence="1" type="primary">rpmB</name>
    <name type="ordered locus">PHZ_c0722</name>
</gene>
<name>RL28_PHEZH</name>
<protein>
    <recommendedName>
        <fullName evidence="1">Large ribosomal subunit protein bL28</fullName>
    </recommendedName>
    <alternativeName>
        <fullName evidence="2">50S ribosomal protein L28</fullName>
    </alternativeName>
</protein>